<accession>Q5UPD7</accession>
<organism>
    <name type="scientific">Acanthamoeba polyphaga mimivirus</name>
    <name type="common">APMV</name>
    <dbReference type="NCBI Taxonomy" id="212035"/>
    <lineage>
        <taxon>Viruses</taxon>
        <taxon>Varidnaviria</taxon>
        <taxon>Bamfordvirae</taxon>
        <taxon>Nucleocytoviricota</taxon>
        <taxon>Megaviricetes</taxon>
        <taxon>Imitervirales</taxon>
        <taxon>Mimiviridae</taxon>
        <taxon>Megamimivirinae</taxon>
        <taxon>Mimivirus</taxon>
        <taxon>Mimivirus bradfordmassiliense</taxon>
    </lineage>
</organism>
<keyword id="KW-1185">Reference proteome</keyword>
<evidence type="ECO:0000305" key="1"/>
<feature type="chain" id="PRO_0000071196" description="Uncharacterized protein L57">
    <location>
        <begin position="1"/>
        <end position="182"/>
    </location>
</feature>
<reference key="1">
    <citation type="journal article" date="2004" name="Science">
        <title>The 1.2-megabase genome sequence of Mimivirus.</title>
        <authorList>
            <person name="Raoult D."/>
            <person name="Audic S."/>
            <person name="Robert C."/>
            <person name="Abergel C."/>
            <person name="Renesto P."/>
            <person name="Ogata H."/>
            <person name="La Scola B."/>
            <person name="Susan M."/>
            <person name="Claverie J.-M."/>
        </authorList>
    </citation>
    <scope>NUCLEOTIDE SEQUENCE [LARGE SCALE GENOMIC DNA]</scope>
    <source>
        <strain>Rowbotham-Bradford</strain>
    </source>
</reference>
<dbReference type="EMBL" id="AY653733">
    <property type="protein sequence ID" value="AAV50332.1"/>
    <property type="molecule type" value="Genomic_DNA"/>
</dbReference>
<dbReference type="KEGG" id="vg:9924645"/>
<dbReference type="Proteomes" id="UP000001134">
    <property type="component" value="Genome"/>
</dbReference>
<sequence length="182" mass="21415">MNNYFTTVYPIKKILEKNGCKNCKVGYTGQRAFIIKCEKCKNYDRGNKLKKKNGRVEVSTSQELSIFPIGSMVSYINNKDEFRKGGYITKITADYFIYVTPDFETKYRVRYKNIKKMWVGDVYKVSSDIVSLSETTQPKTDFPVKIGNITVYYASDNTKKKNFMKTKKYKTSLEWYNYFHKN</sequence>
<proteinExistence type="inferred from homology"/>
<comment type="similarity">
    <text evidence="1">Belongs to the mimivirus L6/L7/L57 family.</text>
</comment>
<gene>
    <name type="ordered locus">MIMI_L57</name>
</gene>
<name>YL057_MIMIV</name>
<organismHost>
    <name type="scientific">Acanthamoeba polyphaga</name>
    <name type="common">Amoeba</name>
    <dbReference type="NCBI Taxonomy" id="5757"/>
</organismHost>
<protein>
    <recommendedName>
        <fullName>Uncharacterized protein L57</fullName>
    </recommendedName>
</protein>